<keyword id="KW-0027">Amidation</keyword>
<keyword id="KW-0108">Calcium channel impairing toxin</keyword>
<keyword id="KW-0903">Direct protein sequencing</keyword>
<keyword id="KW-1015">Disulfide bond</keyword>
<keyword id="KW-0872">Ion channel impairing toxin</keyword>
<keyword id="KW-0960">Knottin</keyword>
<keyword id="KW-0528">Neurotoxin</keyword>
<keyword id="KW-0638">Presynaptic neurotoxin</keyword>
<keyword id="KW-0964">Secreted</keyword>
<keyword id="KW-0800">Toxin</keyword>
<keyword id="KW-1218">Voltage-gated calcium channel impairing toxin</keyword>
<feature type="peptide" id="PRO_0000044881" description="Omega-conotoxin-like Vn2">
    <location>
        <begin position="1"/>
        <end position="33"/>
    </location>
</feature>
<feature type="modified residue" description="Proline amide" evidence="2">
    <location>
        <position position="33"/>
    </location>
</feature>
<feature type="disulfide bond" evidence="1">
    <location>
        <begin position="3"/>
        <end position="20"/>
    </location>
</feature>
<feature type="disulfide bond" evidence="1">
    <location>
        <begin position="10"/>
        <end position="24"/>
    </location>
</feature>
<feature type="disulfide bond" evidence="1">
    <location>
        <begin position="19"/>
        <end position="28"/>
    </location>
</feature>
<feature type="mutagenesis site" description="Increase in toxicity in insect larvae." evidence="3">
    <original>D</original>
    <variation>A</variation>
    <location>
        <position position="2"/>
    </location>
</feature>
<accession>P83301</accession>
<dbReference type="SMR" id="P83301"/>
<dbReference type="TCDB" id="8.B.4.1.1">
    <property type="family name" value="the conotoxin t (conotoxin t) family"/>
</dbReference>
<dbReference type="ConoServer" id="1390">
    <property type="toxin name" value="Vn6A"/>
</dbReference>
<dbReference type="GO" id="GO:0005576">
    <property type="term" value="C:extracellular region"/>
    <property type="evidence" value="ECO:0007669"/>
    <property type="project" value="UniProtKB-SubCell"/>
</dbReference>
<dbReference type="GO" id="GO:0044231">
    <property type="term" value="C:host cell presynaptic membrane"/>
    <property type="evidence" value="ECO:0007669"/>
    <property type="project" value="UniProtKB-KW"/>
</dbReference>
<dbReference type="GO" id="GO:0005246">
    <property type="term" value="F:calcium channel regulator activity"/>
    <property type="evidence" value="ECO:0007669"/>
    <property type="project" value="UniProtKB-KW"/>
</dbReference>
<dbReference type="GO" id="GO:0090729">
    <property type="term" value="F:toxin activity"/>
    <property type="evidence" value="ECO:0007669"/>
    <property type="project" value="UniProtKB-KW"/>
</dbReference>
<proteinExistence type="evidence at protein level"/>
<comment type="function">
    <text evidence="1 3">Omega-conotoxins act at presynaptic membranes, they bind and block voltage-gated calcium channels (Cav) (By similarity). Has strong insecticidal properties at a dose of only 100 pmol/g of body weight (when injected into the haemocoel of the wax moth G.mellonella larvae). Provoques tremor and uncontrolled movements in insect larvae, that are typical symptoms caused by neurotoxins (PubMed:22728460). On fish G.niger, intraperitoneal injection of the toxin causes full extension of the fins, change in posture, breathing difficulties (at 30 and 100 pmol/g body weight) and death (at 100 pmol/g body weight) (PubMed:22728460).</text>
</comment>
<comment type="subcellular location">
    <subcellularLocation>
        <location evidence="2">Secreted</location>
    </subcellularLocation>
</comment>
<comment type="tissue specificity">
    <text evidence="6">Expressed by the venom duct.</text>
</comment>
<comment type="domain">
    <text evidence="1">The presence of a 'disulfide through disulfide knot' structurally defines this protein as a knottin.</text>
</comment>
<comment type="domain">
    <text>The cysteine framework is VI/VII (C-C-CC-C-C).</text>
</comment>
<comment type="toxic dose">
    <text evidence="3">LD(50) is more than 100 pmol/g body weight (at 24 hours) when injected into the haemocoel of the wax moth G.mellonella larvae.</text>
</comment>
<evidence type="ECO:0000250" key="1"/>
<evidence type="ECO:0000269" key="2">
    <source>
    </source>
</evidence>
<evidence type="ECO:0000269" key="3">
    <source>
    </source>
</evidence>
<evidence type="ECO:0000303" key="4">
    <source>
    </source>
</evidence>
<evidence type="ECO:0000303" key="5">
    <source>
    </source>
</evidence>
<evidence type="ECO:0000305" key="6"/>
<reference key="1">
    <citation type="journal article" date="2008" name="J. Sep. Sci.">
        <title>Conus ventricosus venom peptides profiling by HPLC-MS: a new insight in the intraspecific variation.</title>
        <authorList>
            <person name="Romeo C."/>
            <person name="Di Francesco L."/>
            <person name="Oliverio M."/>
            <person name="Palazzo P."/>
            <person name="Massilia G.R."/>
            <person name="Ascenzi P."/>
            <person name="Polticelli F."/>
            <person name="Schinina M.E."/>
        </authorList>
    </citation>
    <scope>PROTEIN SEQUENCE</scope>
    <scope>AMIDATION AT PRO-33</scope>
    <scope>SUBCELLULAR LOCATION</scope>
    <source>
        <tissue>Venom</tissue>
    </source>
</reference>
<reference key="2">
    <citation type="journal article" date="2012" name="Toxicon">
        <title>Recombinant expression and insecticidal properties of a Conus ventricosus conotoxin-GST fusion protein.</title>
        <authorList>
            <person name="Spiezia M.C."/>
            <person name="Chiarabelli C."/>
            <person name="Polticelli F."/>
        </authorList>
    </citation>
    <scope>FUNCTION</scope>
    <scope>TOXIC DOSE</scope>
    <scope>MUTAGENESIS OF ASP-2</scope>
</reference>
<protein>
    <recommendedName>
        <fullName>Omega-conotoxin-like Vn2</fullName>
    </recommendedName>
    <alternativeName>
        <fullName evidence="5">Conotoxin Vn2</fullName>
    </alternativeName>
    <alternativeName>
        <fullName evidence="4">Conotoxin-Vn</fullName>
    </alternativeName>
    <alternativeName>
        <fullName>Vn6A</fullName>
    </alternativeName>
</protein>
<organism>
    <name type="scientific">Conus ventricosus</name>
    <name type="common">Mediterranean cone</name>
    <dbReference type="NCBI Taxonomy" id="117992"/>
    <lineage>
        <taxon>Eukaryota</taxon>
        <taxon>Metazoa</taxon>
        <taxon>Spiralia</taxon>
        <taxon>Lophotrochozoa</taxon>
        <taxon>Mollusca</taxon>
        <taxon>Gastropoda</taxon>
        <taxon>Caenogastropoda</taxon>
        <taxon>Neogastropoda</taxon>
        <taxon>Conoidea</taxon>
        <taxon>Conidae</taxon>
        <taxon>Conus</taxon>
        <taxon>Lautoconus</taxon>
    </lineage>
</organism>
<name>U6VN_CONVE</name>
<sequence length="33" mass="3546">EDCIAVGQLCVFWNIGRPCCSGLCVFACTVKLP</sequence>